<reference key="1">
    <citation type="journal article" date="2011" name="J. Bacteriol.">
        <title>Genome sequence of Thermotoga sp. strain RQ2, a hyperthermophilic bacterium isolated from a geothermally heated region of the seafloor near Ribeira Quente, the Azores.</title>
        <authorList>
            <person name="Swithers K.S."/>
            <person name="DiPippo J.L."/>
            <person name="Bruce D.C."/>
            <person name="Detter C."/>
            <person name="Tapia R."/>
            <person name="Han S."/>
            <person name="Saunders E."/>
            <person name="Goodwin L.A."/>
            <person name="Han J."/>
            <person name="Woyke T."/>
            <person name="Pitluck S."/>
            <person name="Pennacchio L."/>
            <person name="Nolan M."/>
            <person name="Mikhailova N."/>
            <person name="Lykidis A."/>
            <person name="Land M.L."/>
            <person name="Brettin T."/>
            <person name="Stetter K.O."/>
            <person name="Nelson K.E."/>
            <person name="Gogarten J.P."/>
            <person name="Noll K.M."/>
        </authorList>
    </citation>
    <scope>NUCLEOTIDE SEQUENCE [LARGE SCALE GENOMIC DNA]</scope>
    <source>
        <strain>RQ2</strain>
    </source>
</reference>
<name>RL20_THESQ</name>
<protein>
    <recommendedName>
        <fullName evidence="1">Large ribosomal subunit protein bL20</fullName>
    </recommendedName>
    <alternativeName>
        <fullName evidence="2">50S ribosomal protein L20</fullName>
    </alternativeName>
</protein>
<organism>
    <name type="scientific">Thermotoga sp. (strain RQ2)</name>
    <dbReference type="NCBI Taxonomy" id="126740"/>
    <lineage>
        <taxon>Bacteria</taxon>
        <taxon>Thermotogati</taxon>
        <taxon>Thermotogota</taxon>
        <taxon>Thermotogae</taxon>
        <taxon>Thermotogales</taxon>
        <taxon>Thermotogaceae</taxon>
        <taxon>Thermotoga</taxon>
    </lineage>
</organism>
<dbReference type="EMBL" id="CP000969">
    <property type="protein sequence ID" value="ACB09599.1"/>
    <property type="molecule type" value="Genomic_DNA"/>
</dbReference>
<dbReference type="RefSeq" id="WP_004082031.1">
    <property type="nucleotide sequence ID" value="NC_010483.1"/>
</dbReference>
<dbReference type="SMR" id="B1LBA1"/>
<dbReference type="KEGG" id="trq:TRQ2_1255"/>
<dbReference type="HOGENOM" id="CLU_123265_0_1_0"/>
<dbReference type="Proteomes" id="UP000001687">
    <property type="component" value="Chromosome"/>
</dbReference>
<dbReference type="GO" id="GO:1990904">
    <property type="term" value="C:ribonucleoprotein complex"/>
    <property type="evidence" value="ECO:0007669"/>
    <property type="project" value="UniProtKB-KW"/>
</dbReference>
<dbReference type="GO" id="GO:0005840">
    <property type="term" value="C:ribosome"/>
    <property type="evidence" value="ECO:0007669"/>
    <property type="project" value="UniProtKB-KW"/>
</dbReference>
<dbReference type="GO" id="GO:0019843">
    <property type="term" value="F:rRNA binding"/>
    <property type="evidence" value="ECO:0007669"/>
    <property type="project" value="UniProtKB-UniRule"/>
</dbReference>
<dbReference type="GO" id="GO:0003735">
    <property type="term" value="F:structural constituent of ribosome"/>
    <property type="evidence" value="ECO:0007669"/>
    <property type="project" value="InterPro"/>
</dbReference>
<dbReference type="GO" id="GO:0000027">
    <property type="term" value="P:ribosomal large subunit assembly"/>
    <property type="evidence" value="ECO:0007669"/>
    <property type="project" value="UniProtKB-UniRule"/>
</dbReference>
<dbReference type="GO" id="GO:0006412">
    <property type="term" value="P:translation"/>
    <property type="evidence" value="ECO:0007669"/>
    <property type="project" value="InterPro"/>
</dbReference>
<dbReference type="CDD" id="cd07026">
    <property type="entry name" value="Ribosomal_L20"/>
    <property type="match status" value="1"/>
</dbReference>
<dbReference type="FunFam" id="1.10.1900.20:FF:000001">
    <property type="entry name" value="50S ribosomal protein L20"/>
    <property type="match status" value="1"/>
</dbReference>
<dbReference type="Gene3D" id="6.10.160.10">
    <property type="match status" value="1"/>
</dbReference>
<dbReference type="Gene3D" id="1.10.1900.20">
    <property type="entry name" value="Ribosomal protein L20"/>
    <property type="match status" value="1"/>
</dbReference>
<dbReference type="HAMAP" id="MF_00382">
    <property type="entry name" value="Ribosomal_bL20"/>
    <property type="match status" value="1"/>
</dbReference>
<dbReference type="InterPro" id="IPR005813">
    <property type="entry name" value="Ribosomal_bL20"/>
</dbReference>
<dbReference type="InterPro" id="IPR049946">
    <property type="entry name" value="RIBOSOMAL_L20_CS"/>
</dbReference>
<dbReference type="InterPro" id="IPR035566">
    <property type="entry name" value="Ribosomal_protein_bL20_C"/>
</dbReference>
<dbReference type="NCBIfam" id="TIGR01032">
    <property type="entry name" value="rplT_bact"/>
    <property type="match status" value="1"/>
</dbReference>
<dbReference type="PANTHER" id="PTHR10986">
    <property type="entry name" value="39S RIBOSOMAL PROTEIN L20"/>
    <property type="match status" value="1"/>
</dbReference>
<dbReference type="Pfam" id="PF00453">
    <property type="entry name" value="Ribosomal_L20"/>
    <property type="match status" value="1"/>
</dbReference>
<dbReference type="PRINTS" id="PR00062">
    <property type="entry name" value="RIBOSOMALL20"/>
</dbReference>
<dbReference type="SUPFAM" id="SSF74731">
    <property type="entry name" value="Ribosomal protein L20"/>
    <property type="match status" value="1"/>
</dbReference>
<dbReference type="PROSITE" id="PS00937">
    <property type="entry name" value="RIBOSOMAL_L20"/>
    <property type="match status" value="1"/>
</dbReference>
<evidence type="ECO:0000255" key="1">
    <source>
        <dbReference type="HAMAP-Rule" id="MF_00382"/>
    </source>
</evidence>
<evidence type="ECO:0000305" key="2"/>
<comment type="function">
    <text evidence="1">Binds directly to 23S ribosomal RNA and is necessary for the in vitro assembly process of the 50S ribosomal subunit. It is not involved in the protein synthesizing functions of that subunit.</text>
</comment>
<comment type="similarity">
    <text evidence="1">Belongs to the bacterial ribosomal protein bL20 family.</text>
</comment>
<proteinExistence type="inferred from homology"/>
<gene>
    <name evidence="1" type="primary">rplT</name>
    <name type="ordered locus">TRQ2_1255</name>
</gene>
<accession>B1LBA1</accession>
<feature type="chain" id="PRO_1000122386" description="Large ribosomal subunit protein bL20">
    <location>
        <begin position="1"/>
        <end position="118"/>
    </location>
</feature>
<sequence>MRVKRAVHAKKKRKKYLKAAKGYRGALSRRYKLAKQMYVRSKWYSYVGRKQKKRDMRKLWITRINIAARNEGLKYSELIHGLKLAGVSINRKMLSELAVNDPEAFKEYVKIAKEALAS</sequence>
<keyword id="KW-0687">Ribonucleoprotein</keyword>
<keyword id="KW-0689">Ribosomal protein</keyword>
<keyword id="KW-0694">RNA-binding</keyword>
<keyword id="KW-0699">rRNA-binding</keyword>